<comment type="function">
    <text evidence="1">Catalyzes the transfer of the gamma-phosphate of ATP to D-galactose to form alpha-D-galactose-1-phosphate (Gal-1-P).</text>
</comment>
<comment type="catalytic activity">
    <reaction evidence="1">
        <text>alpha-D-galactose + ATP = alpha-D-galactose 1-phosphate + ADP + H(+)</text>
        <dbReference type="Rhea" id="RHEA:13553"/>
        <dbReference type="ChEBI" id="CHEBI:15378"/>
        <dbReference type="ChEBI" id="CHEBI:28061"/>
        <dbReference type="ChEBI" id="CHEBI:30616"/>
        <dbReference type="ChEBI" id="CHEBI:58336"/>
        <dbReference type="ChEBI" id="CHEBI:456216"/>
        <dbReference type="EC" id="2.7.1.6"/>
    </reaction>
</comment>
<comment type="pathway">
    <text evidence="1">Carbohydrate metabolism; galactose metabolism.</text>
</comment>
<comment type="subcellular location">
    <subcellularLocation>
        <location evidence="1">Cytoplasm</location>
    </subcellularLocation>
</comment>
<comment type="similarity">
    <text evidence="1">Belongs to the GHMP kinase family. GalK subfamily.</text>
</comment>
<proteinExistence type="inferred from homology"/>
<sequence length="386" mass="42049">MSELIQNVKTSFEQVLGYAPSHIIQAPGRVNLIGEHTDYNDGFVLPCAINYQTVVAAAKREDNIVRVVSVDYGNAVDEFDITQAITFQQDKMWANYIRGVVKCLLARGYSFTGADISVSGNVPQGAGLSSSAALEVVIGQTFKVLFNLEISQAEIALNGQQAENEFVGCNCGIMDQMISAEGRENHAMLLDCRSLETESVSMPEEMAVVIINSNKKRGLVDSEYNTRRQQCEEAARIFGVKALRDVTIEQFNEKVAELDEMVAKRARHVITENDRTVEAAQALRAHDMKRMGELMAESHASMRDDFEITVKEIDTLVEIVKEVIGDQGGVRMTGGGFGGCIVALVPPALVDDVKATVAAKYQAATGLKESIYVCQAKDGAGLVEVL</sequence>
<evidence type="ECO:0000255" key="1">
    <source>
        <dbReference type="HAMAP-Rule" id="MF_00246"/>
    </source>
</evidence>
<accession>Q8DBN9</accession>
<keyword id="KW-0067">ATP-binding</keyword>
<keyword id="KW-0119">Carbohydrate metabolism</keyword>
<keyword id="KW-0963">Cytoplasm</keyword>
<keyword id="KW-0299">Galactose metabolism</keyword>
<keyword id="KW-0418">Kinase</keyword>
<keyword id="KW-0460">Magnesium</keyword>
<keyword id="KW-0479">Metal-binding</keyword>
<keyword id="KW-0547">Nucleotide-binding</keyword>
<keyword id="KW-0808">Transferase</keyword>
<feature type="chain" id="PRO_0000184638" description="Galactokinase">
    <location>
        <begin position="1"/>
        <end position="386"/>
    </location>
</feature>
<feature type="active site" description="Proton acceptor" evidence="1">
    <location>
        <position position="175"/>
    </location>
</feature>
<feature type="binding site" evidence="1">
    <location>
        <begin position="35"/>
        <end position="38"/>
    </location>
    <ligand>
        <name>substrate</name>
    </ligand>
</feature>
<feature type="binding site" evidence="1">
    <location>
        <position position="69"/>
    </location>
    <ligand>
        <name>ATP</name>
        <dbReference type="ChEBI" id="CHEBI:30616"/>
    </ligand>
</feature>
<feature type="binding site" evidence="1">
    <location>
        <begin position="125"/>
        <end position="131"/>
    </location>
    <ligand>
        <name>ATP</name>
        <dbReference type="ChEBI" id="CHEBI:30616"/>
    </ligand>
</feature>
<feature type="binding site" evidence="1">
    <location>
        <position position="131"/>
    </location>
    <ligand>
        <name>Mg(2+)</name>
        <dbReference type="ChEBI" id="CHEBI:18420"/>
    </ligand>
</feature>
<feature type="binding site" evidence="1">
    <location>
        <position position="163"/>
    </location>
    <ligand>
        <name>Mg(2+)</name>
        <dbReference type="ChEBI" id="CHEBI:18420"/>
    </ligand>
</feature>
<feature type="binding site" evidence="1">
    <location>
        <position position="224"/>
    </location>
    <ligand>
        <name>substrate</name>
    </ligand>
</feature>
<feature type="site" description="Transition state stabilizer" evidence="1">
    <location>
        <position position="29"/>
    </location>
</feature>
<reference key="1">
    <citation type="submission" date="2002-12" db="EMBL/GenBank/DDBJ databases">
        <title>Complete genome sequence of Vibrio vulnificus CMCP6.</title>
        <authorList>
            <person name="Rhee J.H."/>
            <person name="Kim S.Y."/>
            <person name="Chung S.S."/>
            <person name="Kim J.J."/>
            <person name="Moon Y.H."/>
            <person name="Jeong H."/>
            <person name="Choy H.E."/>
        </authorList>
    </citation>
    <scope>NUCLEOTIDE SEQUENCE [LARGE SCALE GENOMIC DNA]</scope>
    <source>
        <strain>CMCP6</strain>
    </source>
</reference>
<organism>
    <name type="scientific">Vibrio vulnificus (strain CMCP6)</name>
    <dbReference type="NCBI Taxonomy" id="216895"/>
    <lineage>
        <taxon>Bacteria</taxon>
        <taxon>Pseudomonadati</taxon>
        <taxon>Pseudomonadota</taxon>
        <taxon>Gammaproteobacteria</taxon>
        <taxon>Vibrionales</taxon>
        <taxon>Vibrionaceae</taxon>
        <taxon>Vibrio</taxon>
    </lineage>
</organism>
<protein>
    <recommendedName>
        <fullName evidence="1">Galactokinase</fullName>
        <ecNumber evidence="1">2.7.1.6</ecNumber>
    </recommendedName>
    <alternativeName>
        <fullName evidence="1">Galactose kinase</fullName>
    </alternativeName>
</protein>
<dbReference type="EC" id="2.7.1.6" evidence="1"/>
<dbReference type="EMBL" id="AE016795">
    <property type="protein sequence ID" value="AAO10183.1"/>
    <property type="molecule type" value="Genomic_DNA"/>
</dbReference>
<dbReference type="RefSeq" id="WP_011079683.1">
    <property type="nucleotide sequence ID" value="NC_004459.3"/>
</dbReference>
<dbReference type="SMR" id="Q8DBN9"/>
<dbReference type="KEGG" id="vvu:VV1_1772"/>
<dbReference type="HOGENOM" id="CLU_017814_2_1_6"/>
<dbReference type="UniPathway" id="UPA00214"/>
<dbReference type="Proteomes" id="UP000002275">
    <property type="component" value="Chromosome 1"/>
</dbReference>
<dbReference type="GO" id="GO:0005829">
    <property type="term" value="C:cytosol"/>
    <property type="evidence" value="ECO:0007669"/>
    <property type="project" value="TreeGrafter"/>
</dbReference>
<dbReference type="GO" id="GO:0005524">
    <property type="term" value="F:ATP binding"/>
    <property type="evidence" value="ECO:0007669"/>
    <property type="project" value="UniProtKB-UniRule"/>
</dbReference>
<dbReference type="GO" id="GO:0004335">
    <property type="term" value="F:galactokinase activity"/>
    <property type="evidence" value="ECO:0007669"/>
    <property type="project" value="UniProtKB-UniRule"/>
</dbReference>
<dbReference type="GO" id="GO:0000287">
    <property type="term" value="F:magnesium ion binding"/>
    <property type="evidence" value="ECO:0007669"/>
    <property type="project" value="UniProtKB-UniRule"/>
</dbReference>
<dbReference type="GO" id="GO:0006012">
    <property type="term" value="P:galactose metabolic process"/>
    <property type="evidence" value="ECO:0007669"/>
    <property type="project" value="UniProtKB-UniRule"/>
</dbReference>
<dbReference type="FunFam" id="3.30.230.10:FF:000017">
    <property type="entry name" value="Galactokinase"/>
    <property type="match status" value="1"/>
</dbReference>
<dbReference type="FunFam" id="3.30.70.890:FF:000001">
    <property type="entry name" value="Galactokinase"/>
    <property type="match status" value="1"/>
</dbReference>
<dbReference type="Gene3D" id="3.30.230.10">
    <property type="match status" value="1"/>
</dbReference>
<dbReference type="Gene3D" id="3.30.70.890">
    <property type="entry name" value="GHMP kinase, C-terminal domain"/>
    <property type="match status" value="1"/>
</dbReference>
<dbReference type="HAMAP" id="MF_00246">
    <property type="entry name" value="Galactokinase"/>
    <property type="match status" value="1"/>
</dbReference>
<dbReference type="InterPro" id="IPR000705">
    <property type="entry name" value="Galactokinase"/>
</dbReference>
<dbReference type="InterPro" id="IPR022963">
    <property type="entry name" value="Galactokinase_bac"/>
</dbReference>
<dbReference type="InterPro" id="IPR019741">
    <property type="entry name" value="Galactokinase_CS"/>
</dbReference>
<dbReference type="InterPro" id="IPR019539">
    <property type="entry name" value="GalKase_N"/>
</dbReference>
<dbReference type="InterPro" id="IPR013750">
    <property type="entry name" value="GHMP_kinase_C_dom"/>
</dbReference>
<dbReference type="InterPro" id="IPR036554">
    <property type="entry name" value="GHMP_kinase_C_sf"/>
</dbReference>
<dbReference type="InterPro" id="IPR006204">
    <property type="entry name" value="GHMP_kinase_N_dom"/>
</dbReference>
<dbReference type="InterPro" id="IPR006203">
    <property type="entry name" value="GHMP_knse_ATP-bd_CS"/>
</dbReference>
<dbReference type="InterPro" id="IPR006206">
    <property type="entry name" value="Mevalonate/galactokinase"/>
</dbReference>
<dbReference type="InterPro" id="IPR020568">
    <property type="entry name" value="Ribosomal_Su5_D2-typ_SF"/>
</dbReference>
<dbReference type="InterPro" id="IPR014721">
    <property type="entry name" value="Ribsml_uS5_D2-typ_fold_subgr"/>
</dbReference>
<dbReference type="NCBIfam" id="TIGR00131">
    <property type="entry name" value="gal_kin"/>
    <property type="match status" value="1"/>
</dbReference>
<dbReference type="NCBIfam" id="NF003472">
    <property type="entry name" value="PRK05101.1"/>
    <property type="match status" value="1"/>
</dbReference>
<dbReference type="NCBIfam" id="NF003705">
    <property type="entry name" value="PRK05322.1"/>
    <property type="match status" value="1"/>
</dbReference>
<dbReference type="PANTHER" id="PTHR10457:SF7">
    <property type="entry name" value="GALACTOKINASE-RELATED"/>
    <property type="match status" value="1"/>
</dbReference>
<dbReference type="PANTHER" id="PTHR10457">
    <property type="entry name" value="MEVALONATE KINASE/GALACTOKINASE"/>
    <property type="match status" value="1"/>
</dbReference>
<dbReference type="Pfam" id="PF10509">
    <property type="entry name" value="GalKase_gal_bdg"/>
    <property type="match status" value="1"/>
</dbReference>
<dbReference type="Pfam" id="PF08544">
    <property type="entry name" value="GHMP_kinases_C"/>
    <property type="match status" value="1"/>
</dbReference>
<dbReference type="Pfam" id="PF00288">
    <property type="entry name" value="GHMP_kinases_N"/>
    <property type="match status" value="1"/>
</dbReference>
<dbReference type="PIRSF" id="PIRSF000530">
    <property type="entry name" value="Galactokinase"/>
    <property type="match status" value="1"/>
</dbReference>
<dbReference type="PRINTS" id="PR00473">
    <property type="entry name" value="GALCTOKINASE"/>
</dbReference>
<dbReference type="PRINTS" id="PR00959">
    <property type="entry name" value="MEVGALKINASE"/>
</dbReference>
<dbReference type="SUPFAM" id="SSF55060">
    <property type="entry name" value="GHMP Kinase, C-terminal domain"/>
    <property type="match status" value="1"/>
</dbReference>
<dbReference type="SUPFAM" id="SSF54211">
    <property type="entry name" value="Ribosomal protein S5 domain 2-like"/>
    <property type="match status" value="1"/>
</dbReference>
<dbReference type="PROSITE" id="PS00106">
    <property type="entry name" value="GALACTOKINASE"/>
    <property type="match status" value="1"/>
</dbReference>
<dbReference type="PROSITE" id="PS00627">
    <property type="entry name" value="GHMP_KINASES_ATP"/>
    <property type="match status" value="1"/>
</dbReference>
<name>GAL1_VIBVU</name>
<gene>
    <name evidence="1" type="primary">galK</name>
    <name type="ordered locus">VV1_1772</name>
</gene>